<accession>P67359</accession>
<accession>Q99V05</accession>
<evidence type="ECO:0000255" key="1">
    <source>
        <dbReference type="HAMAP-Rule" id="MF_01041"/>
    </source>
</evidence>
<protein>
    <recommendedName>
        <fullName evidence="1">UPF0223 protein SA0947</fullName>
    </recommendedName>
</protein>
<name>Y947_STAAN</name>
<comment type="similarity">
    <text evidence="1">Belongs to the UPF0223 family.</text>
</comment>
<organism>
    <name type="scientific">Staphylococcus aureus (strain N315)</name>
    <dbReference type="NCBI Taxonomy" id="158879"/>
    <lineage>
        <taxon>Bacteria</taxon>
        <taxon>Bacillati</taxon>
        <taxon>Bacillota</taxon>
        <taxon>Bacilli</taxon>
        <taxon>Bacillales</taxon>
        <taxon>Staphylococcaceae</taxon>
        <taxon>Staphylococcus</taxon>
    </lineage>
</organism>
<reference key="1">
    <citation type="journal article" date="2001" name="Lancet">
        <title>Whole genome sequencing of meticillin-resistant Staphylococcus aureus.</title>
        <authorList>
            <person name="Kuroda M."/>
            <person name="Ohta T."/>
            <person name="Uchiyama I."/>
            <person name="Baba T."/>
            <person name="Yuzawa H."/>
            <person name="Kobayashi I."/>
            <person name="Cui L."/>
            <person name="Oguchi A."/>
            <person name="Aoki K."/>
            <person name="Nagai Y."/>
            <person name="Lian J.-Q."/>
            <person name="Ito T."/>
            <person name="Kanamori M."/>
            <person name="Matsumaru H."/>
            <person name="Maruyama A."/>
            <person name="Murakami H."/>
            <person name="Hosoyama A."/>
            <person name="Mizutani-Ui Y."/>
            <person name="Takahashi N.K."/>
            <person name="Sawano T."/>
            <person name="Inoue R."/>
            <person name="Kaito C."/>
            <person name="Sekimizu K."/>
            <person name="Hirakawa H."/>
            <person name="Kuhara S."/>
            <person name="Goto S."/>
            <person name="Yabuzaki J."/>
            <person name="Kanehisa M."/>
            <person name="Yamashita A."/>
            <person name="Oshima K."/>
            <person name="Furuya K."/>
            <person name="Yoshino C."/>
            <person name="Shiba T."/>
            <person name="Hattori M."/>
            <person name="Ogasawara N."/>
            <person name="Hayashi H."/>
            <person name="Hiramatsu K."/>
        </authorList>
    </citation>
    <scope>NUCLEOTIDE SEQUENCE [LARGE SCALE GENOMIC DNA]</scope>
    <source>
        <strain>N315</strain>
    </source>
</reference>
<proteinExistence type="inferred from homology"/>
<feature type="chain" id="PRO_0000216685" description="UPF0223 protein SA0947">
    <location>
        <begin position="1"/>
        <end position="91"/>
    </location>
</feature>
<sequence length="91" mass="10692">MEYEYPIDLDWSNEEMISVINFFNHVEKYYESGVTAGDFMGAYKRFKEIVPAKAEEKQIFNTFEKSSGYNSYKAVQDVKTHSEEQRVTAKK</sequence>
<gene>
    <name type="ordered locus">SA0947</name>
</gene>
<dbReference type="EMBL" id="BA000018">
    <property type="protein sequence ID" value="BAB42193.1"/>
    <property type="molecule type" value="Genomic_DNA"/>
</dbReference>
<dbReference type="PIR" id="F89879">
    <property type="entry name" value="F89879"/>
</dbReference>
<dbReference type="RefSeq" id="WP_000455597.1">
    <property type="nucleotide sequence ID" value="NC_002745.2"/>
</dbReference>
<dbReference type="SMR" id="P67359"/>
<dbReference type="EnsemblBacteria" id="BAB42193">
    <property type="protein sequence ID" value="BAB42193"/>
    <property type="gene ID" value="BAB42193"/>
</dbReference>
<dbReference type="KEGG" id="sau:SA0947"/>
<dbReference type="HOGENOM" id="CLU_166693_0_0_9"/>
<dbReference type="Gene3D" id="1.10.220.80">
    <property type="entry name" value="BH2638-like"/>
    <property type="match status" value="1"/>
</dbReference>
<dbReference type="HAMAP" id="MF_01041">
    <property type="entry name" value="UPF0223"/>
    <property type="match status" value="1"/>
</dbReference>
<dbReference type="InterPro" id="IPR023324">
    <property type="entry name" value="BH2638-like_sf"/>
</dbReference>
<dbReference type="InterPro" id="IPR007920">
    <property type="entry name" value="UPF0223"/>
</dbReference>
<dbReference type="NCBIfam" id="NF003353">
    <property type="entry name" value="PRK04387.1"/>
    <property type="match status" value="1"/>
</dbReference>
<dbReference type="Pfam" id="PF05256">
    <property type="entry name" value="UPF0223"/>
    <property type="match status" value="1"/>
</dbReference>
<dbReference type="PIRSF" id="PIRSF037260">
    <property type="entry name" value="UPF0223"/>
    <property type="match status" value="1"/>
</dbReference>
<dbReference type="SUPFAM" id="SSF158504">
    <property type="entry name" value="BH2638-like"/>
    <property type="match status" value="1"/>
</dbReference>